<evidence type="ECO:0000255" key="1">
    <source>
        <dbReference type="HAMAP-Rule" id="MF_00057"/>
    </source>
</evidence>
<keyword id="KW-0963">Cytoplasm</keyword>
<keyword id="KW-0448">Lipopolysaccharide biosynthesis</keyword>
<keyword id="KW-0548">Nucleotidyltransferase</keyword>
<keyword id="KW-0808">Transferase</keyword>
<reference key="1">
    <citation type="submission" date="2006-12" db="EMBL/GenBank/DDBJ databases">
        <title>Complete sequence of chromosome 1 of Acidovorax sp. JS42.</title>
        <authorList>
            <person name="Copeland A."/>
            <person name="Lucas S."/>
            <person name="Lapidus A."/>
            <person name="Barry K."/>
            <person name="Detter J.C."/>
            <person name="Glavina del Rio T."/>
            <person name="Dalin E."/>
            <person name="Tice H."/>
            <person name="Pitluck S."/>
            <person name="Chertkov O."/>
            <person name="Brettin T."/>
            <person name="Bruce D."/>
            <person name="Han C."/>
            <person name="Tapia R."/>
            <person name="Gilna P."/>
            <person name="Schmutz J."/>
            <person name="Larimer F."/>
            <person name="Land M."/>
            <person name="Hauser L."/>
            <person name="Kyrpides N."/>
            <person name="Kim E."/>
            <person name="Stahl D."/>
            <person name="Richardson P."/>
        </authorList>
    </citation>
    <scope>NUCLEOTIDE SEQUENCE [LARGE SCALE GENOMIC DNA]</scope>
    <source>
        <strain>JS42</strain>
    </source>
</reference>
<sequence>MSRAAPFTVLIPARLASTRLPNKPLADIAGLPMVVHVARRASQSGAQRCVVAADDARIVQACQAHGVQALLTRADHASGSDRLAEACELLGLAGEDIVVNVQGDEPLIDPRLIDAVAALLHARGDASMGTAAHAIDSAEDFANPNVVKVVLDAQGLAHYFSRAPIPHARDHAPGSLWWQPGQTGVPVGFAPLRHIGIYSYRAGFLRRFPQLPAAPTEQLEALEQLRALWHGHRIAVHVTGSAPGAGVDTPADLERVRTLLGG</sequence>
<protein>
    <recommendedName>
        <fullName evidence="1">3-deoxy-manno-octulosonate cytidylyltransferase</fullName>
        <ecNumber evidence="1">2.7.7.38</ecNumber>
    </recommendedName>
    <alternativeName>
        <fullName evidence="1">CMP-2-keto-3-deoxyoctulosonic acid synthase</fullName>
        <shortName evidence="1">CKS</shortName>
        <shortName evidence="1">CMP-KDO synthase</shortName>
    </alternativeName>
</protein>
<accession>A1W894</accession>
<gene>
    <name evidence="1" type="primary">kdsB</name>
    <name type="ordered locus">Ajs_2307</name>
</gene>
<dbReference type="EC" id="2.7.7.38" evidence="1"/>
<dbReference type="EMBL" id="CP000539">
    <property type="protein sequence ID" value="ABM42469.1"/>
    <property type="molecule type" value="Genomic_DNA"/>
</dbReference>
<dbReference type="SMR" id="A1W894"/>
<dbReference type="STRING" id="232721.Ajs_2307"/>
<dbReference type="KEGG" id="ajs:Ajs_2307"/>
<dbReference type="eggNOG" id="COG1212">
    <property type="taxonomic scope" value="Bacteria"/>
</dbReference>
<dbReference type="HOGENOM" id="CLU_065038_1_0_4"/>
<dbReference type="UniPathway" id="UPA00030"/>
<dbReference type="UniPathway" id="UPA00358">
    <property type="reaction ID" value="UER00476"/>
</dbReference>
<dbReference type="Proteomes" id="UP000000645">
    <property type="component" value="Chromosome"/>
</dbReference>
<dbReference type="GO" id="GO:0005829">
    <property type="term" value="C:cytosol"/>
    <property type="evidence" value="ECO:0007669"/>
    <property type="project" value="TreeGrafter"/>
</dbReference>
<dbReference type="GO" id="GO:0008690">
    <property type="term" value="F:3-deoxy-manno-octulosonate cytidylyltransferase activity"/>
    <property type="evidence" value="ECO:0007669"/>
    <property type="project" value="UniProtKB-UniRule"/>
</dbReference>
<dbReference type="GO" id="GO:0033468">
    <property type="term" value="P:CMP-keto-3-deoxy-D-manno-octulosonic acid biosynthetic process"/>
    <property type="evidence" value="ECO:0007669"/>
    <property type="project" value="UniProtKB-UniRule"/>
</dbReference>
<dbReference type="GO" id="GO:0009103">
    <property type="term" value="P:lipopolysaccharide biosynthetic process"/>
    <property type="evidence" value="ECO:0007669"/>
    <property type="project" value="UniProtKB-UniRule"/>
</dbReference>
<dbReference type="CDD" id="cd02517">
    <property type="entry name" value="CMP-KDO-Synthetase"/>
    <property type="match status" value="1"/>
</dbReference>
<dbReference type="FunFam" id="3.90.550.10:FF:000011">
    <property type="entry name" value="3-deoxy-manno-octulosonate cytidylyltransferase"/>
    <property type="match status" value="1"/>
</dbReference>
<dbReference type="Gene3D" id="3.90.550.10">
    <property type="entry name" value="Spore Coat Polysaccharide Biosynthesis Protein SpsA, Chain A"/>
    <property type="match status" value="1"/>
</dbReference>
<dbReference type="HAMAP" id="MF_00057">
    <property type="entry name" value="KdsB"/>
    <property type="match status" value="1"/>
</dbReference>
<dbReference type="InterPro" id="IPR003329">
    <property type="entry name" value="Cytidylyl_trans"/>
</dbReference>
<dbReference type="InterPro" id="IPR004528">
    <property type="entry name" value="KdsB"/>
</dbReference>
<dbReference type="InterPro" id="IPR029044">
    <property type="entry name" value="Nucleotide-diphossugar_trans"/>
</dbReference>
<dbReference type="NCBIfam" id="TIGR00466">
    <property type="entry name" value="kdsB"/>
    <property type="match status" value="1"/>
</dbReference>
<dbReference type="NCBIfam" id="NF003952">
    <property type="entry name" value="PRK05450.1-5"/>
    <property type="match status" value="1"/>
</dbReference>
<dbReference type="NCBIfam" id="NF009905">
    <property type="entry name" value="PRK13368.1"/>
    <property type="match status" value="1"/>
</dbReference>
<dbReference type="PANTHER" id="PTHR42866">
    <property type="entry name" value="3-DEOXY-MANNO-OCTULOSONATE CYTIDYLYLTRANSFERASE"/>
    <property type="match status" value="1"/>
</dbReference>
<dbReference type="PANTHER" id="PTHR42866:SF2">
    <property type="entry name" value="3-DEOXY-MANNO-OCTULOSONATE CYTIDYLYLTRANSFERASE, MITOCHONDRIAL"/>
    <property type="match status" value="1"/>
</dbReference>
<dbReference type="Pfam" id="PF02348">
    <property type="entry name" value="CTP_transf_3"/>
    <property type="match status" value="1"/>
</dbReference>
<dbReference type="SUPFAM" id="SSF53448">
    <property type="entry name" value="Nucleotide-diphospho-sugar transferases"/>
    <property type="match status" value="1"/>
</dbReference>
<comment type="function">
    <text evidence="1">Activates KDO (a required 8-carbon sugar) for incorporation into bacterial lipopolysaccharide in Gram-negative bacteria.</text>
</comment>
<comment type="catalytic activity">
    <reaction evidence="1">
        <text>3-deoxy-alpha-D-manno-oct-2-ulosonate + CTP = CMP-3-deoxy-beta-D-manno-octulosonate + diphosphate</text>
        <dbReference type="Rhea" id="RHEA:23448"/>
        <dbReference type="ChEBI" id="CHEBI:33019"/>
        <dbReference type="ChEBI" id="CHEBI:37563"/>
        <dbReference type="ChEBI" id="CHEBI:85986"/>
        <dbReference type="ChEBI" id="CHEBI:85987"/>
        <dbReference type="EC" id="2.7.7.38"/>
    </reaction>
</comment>
<comment type="pathway">
    <text evidence="1">Nucleotide-sugar biosynthesis; CMP-3-deoxy-D-manno-octulosonate biosynthesis; CMP-3-deoxy-D-manno-octulosonate from 3-deoxy-D-manno-octulosonate and CTP: step 1/1.</text>
</comment>
<comment type="pathway">
    <text evidence="1">Bacterial outer membrane biogenesis; lipopolysaccharide biosynthesis.</text>
</comment>
<comment type="subcellular location">
    <subcellularLocation>
        <location evidence="1">Cytoplasm</location>
    </subcellularLocation>
</comment>
<comment type="similarity">
    <text evidence="1">Belongs to the KdsB family.</text>
</comment>
<organism>
    <name type="scientific">Acidovorax sp. (strain JS42)</name>
    <dbReference type="NCBI Taxonomy" id="232721"/>
    <lineage>
        <taxon>Bacteria</taxon>
        <taxon>Pseudomonadati</taxon>
        <taxon>Pseudomonadota</taxon>
        <taxon>Betaproteobacteria</taxon>
        <taxon>Burkholderiales</taxon>
        <taxon>Comamonadaceae</taxon>
        <taxon>Acidovorax</taxon>
    </lineage>
</organism>
<name>KDSB_ACISJ</name>
<feature type="chain" id="PRO_0000369982" description="3-deoxy-manno-octulosonate cytidylyltransferase">
    <location>
        <begin position="1"/>
        <end position="262"/>
    </location>
</feature>
<proteinExistence type="inferred from homology"/>